<name>RS17_BORAP</name>
<dbReference type="EMBL" id="CP000395">
    <property type="protein sequence ID" value="ABH01758.1"/>
    <property type="molecule type" value="Genomic_DNA"/>
</dbReference>
<dbReference type="EMBL" id="CP002933">
    <property type="protein sequence ID" value="AEL69712.1"/>
    <property type="molecule type" value="Genomic_DNA"/>
</dbReference>
<dbReference type="RefSeq" id="WP_004789587.1">
    <property type="nucleotide sequence ID" value="NZ_CP160066.1"/>
</dbReference>
<dbReference type="SMR" id="Q0SN20"/>
<dbReference type="STRING" id="29518.BLA32_01825"/>
<dbReference type="GeneID" id="77265334"/>
<dbReference type="KEGG" id="baf:BAPKO_0515"/>
<dbReference type="KEGG" id="bafz:BafPKo_0504"/>
<dbReference type="PATRIC" id="fig|390236.22.peg.484"/>
<dbReference type="eggNOG" id="COG0186">
    <property type="taxonomic scope" value="Bacteria"/>
</dbReference>
<dbReference type="HOGENOM" id="CLU_073626_1_0_12"/>
<dbReference type="OrthoDB" id="9811714at2"/>
<dbReference type="Proteomes" id="UP000005216">
    <property type="component" value="Chromosome"/>
</dbReference>
<dbReference type="GO" id="GO:0022627">
    <property type="term" value="C:cytosolic small ribosomal subunit"/>
    <property type="evidence" value="ECO:0007669"/>
    <property type="project" value="TreeGrafter"/>
</dbReference>
<dbReference type="GO" id="GO:0019843">
    <property type="term" value="F:rRNA binding"/>
    <property type="evidence" value="ECO:0007669"/>
    <property type="project" value="UniProtKB-UniRule"/>
</dbReference>
<dbReference type="GO" id="GO:0003735">
    <property type="term" value="F:structural constituent of ribosome"/>
    <property type="evidence" value="ECO:0007669"/>
    <property type="project" value="InterPro"/>
</dbReference>
<dbReference type="GO" id="GO:0006412">
    <property type="term" value="P:translation"/>
    <property type="evidence" value="ECO:0007669"/>
    <property type="project" value="UniProtKB-UniRule"/>
</dbReference>
<dbReference type="CDD" id="cd00364">
    <property type="entry name" value="Ribosomal_uS17"/>
    <property type="match status" value="1"/>
</dbReference>
<dbReference type="Gene3D" id="2.40.50.140">
    <property type="entry name" value="Nucleic acid-binding proteins"/>
    <property type="match status" value="1"/>
</dbReference>
<dbReference type="HAMAP" id="MF_01345_B">
    <property type="entry name" value="Ribosomal_uS17_B"/>
    <property type="match status" value="1"/>
</dbReference>
<dbReference type="InterPro" id="IPR012340">
    <property type="entry name" value="NA-bd_OB-fold"/>
</dbReference>
<dbReference type="InterPro" id="IPR000266">
    <property type="entry name" value="Ribosomal_uS17"/>
</dbReference>
<dbReference type="InterPro" id="IPR019984">
    <property type="entry name" value="Ribosomal_uS17_bact/chlr"/>
</dbReference>
<dbReference type="InterPro" id="IPR019979">
    <property type="entry name" value="Ribosomal_uS17_CS"/>
</dbReference>
<dbReference type="NCBIfam" id="NF004123">
    <property type="entry name" value="PRK05610.1"/>
    <property type="match status" value="1"/>
</dbReference>
<dbReference type="NCBIfam" id="TIGR03635">
    <property type="entry name" value="uS17_bact"/>
    <property type="match status" value="1"/>
</dbReference>
<dbReference type="PANTHER" id="PTHR10744">
    <property type="entry name" value="40S RIBOSOMAL PROTEIN S11 FAMILY MEMBER"/>
    <property type="match status" value="1"/>
</dbReference>
<dbReference type="PANTHER" id="PTHR10744:SF1">
    <property type="entry name" value="SMALL RIBOSOMAL SUBUNIT PROTEIN US17M"/>
    <property type="match status" value="1"/>
</dbReference>
<dbReference type="Pfam" id="PF00366">
    <property type="entry name" value="Ribosomal_S17"/>
    <property type="match status" value="1"/>
</dbReference>
<dbReference type="PRINTS" id="PR00973">
    <property type="entry name" value="RIBOSOMALS17"/>
</dbReference>
<dbReference type="SUPFAM" id="SSF50249">
    <property type="entry name" value="Nucleic acid-binding proteins"/>
    <property type="match status" value="1"/>
</dbReference>
<dbReference type="PROSITE" id="PS00056">
    <property type="entry name" value="RIBOSOMAL_S17"/>
    <property type="match status" value="1"/>
</dbReference>
<sequence>MARENKKELIGRVVSDKMSKTIVVEIVQRKMHPIYHKYLKVSKKVKAHDEKEVSKVGDKVKIIEVRPISKDKRWSLVEVLEKLK</sequence>
<comment type="function">
    <text evidence="1">One of the primary rRNA binding proteins, it binds specifically to the 5'-end of 16S ribosomal RNA.</text>
</comment>
<comment type="subunit">
    <text evidence="1">Part of the 30S ribosomal subunit.</text>
</comment>
<comment type="similarity">
    <text evidence="1">Belongs to the universal ribosomal protein uS17 family.</text>
</comment>
<protein>
    <recommendedName>
        <fullName evidence="1">Small ribosomal subunit protein uS17</fullName>
    </recommendedName>
    <alternativeName>
        <fullName evidence="2">30S ribosomal protein S17</fullName>
    </alternativeName>
</protein>
<organism>
    <name type="scientific">Borreliella afzelii (strain PKo)</name>
    <name type="common">Borrelia afzelii</name>
    <dbReference type="NCBI Taxonomy" id="390236"/>
    <lineage>
        <taxon>Bacteria</taxon>
        <taxon>Pseudomonadati</taxon>
        <taxon>Spirochaetota</taxon>
        <taxon>Spirochaetia</taxon>
        <taxon>Spirochaetales</taxon>
        <taxon>Borreliaceae</taxon>
        <taxon>Borreliella</taxon>
    </lineage>
</organism>
<gene>
    <name evidence="1" type="primary">rpsQ</name>
    <name type="ordered locus">BAPKO_0515</name>
    <name type="ordered locus">BafPKo_0504</name>
</gene>
<keyword id="KW-0687">Ribonucleoprotein</keyword>
<keyword id="KW-0689">Ribosomal protein</keyword>
<keyword id="KW-0694">RNA-binding</keyword>
<keyword id="KW-0699">rRNA-binding</keyword>
<proteinExistence type="inferred from homology"/>
<evidence type="ECO:0000255" key="1">
    <source>
        <dbReference type="HAMAP-Rule" id="MF_01345"/>
    </source>
</evidence>
<evidence type="ECO:0000305" key="2"/>
<reference key="1">
    <citation type="journal article" date="2006" name="BMC Genomics">
        <title>Comparative genome analysis: selection pressure on the Borrelia vls cassettes is essential for infectivity.</title>
        <authorList>
            <person name="Gloeckner G."/>
            <person name="Schulte-Spechtel U."/>
            <person name="Schilhabel M."/>
            <person name="Felder M."/>
            <person name="Suehnel J."/>
            <person name="Wilske B."/>
            <person name="Platzer M."/>
        </authorList>
    </citation>
    <scope>NUCLEOTIDE SEQUENCE [LARGE SCALE GENOMIC DNA]</scope>
    <source>
        <strain>PKo</strain>
    </source>
</reference>
<reference key="2">
    <citation type="journal article" date="2011" name="J. Bacteriol.">
        <title>Whole-genome sequences of two Borrelia afzelii and two Borrelia garinii Lyme disease agent isolates.</title>
        <authorList>
            <person name="Casjens S.R."/>
            <person name="Mongodin E.F."/>
            <person name="Qiu W.G."/>
            <person name="Dunn J.J."/>
            <person name="Luft B.J."/>
            <person name="Fraser-Liggett C.M."/>
            <person name="Schutzer S.E."/>
        </authorList>
    </citation>
    <scope>NUCLEOTIDE SEQUENCE [LARGE SCALE GENOMIC DNA]</scope>
    <source>
        <strain>PKo</strain>
    </source>
</reference>
<feature type="chain" id="PRO_1000054918" description="Small ribosomal subunit protein uS17">
    <location>
        <begin position="1"/>
        <end position="84"/>
    </location>
</feature>
<accession>Q0SN20</accession>
<accession>G0ISD1</accession>